<dbReference type="EMBL" id="AB018107">
    <property type="protein sequence ID" value="BAB08320.1"/>
    <property type="molecule type" value="Genomic_DNA"/>
</dbReference>
<dbReference type="EMBL" id="CP002688">
    <property type="protein sequence ID" value="AED94225.1"/>
    <property type="molecule type" value="Genomic_DNA"/>
</dbReference>
<dbReference type="EMBL" id="AY074354">
    <property type="protein sequence ID" value="AAL67050.1"/>
    <property type="molecule type" value="mRNA"/>
</dbReference>
<dbReference type="EMBL" id="AY113975">
    <property type="protein sequence ID" value="AAM45023.1"/>
    <property type="molecule type" value="mRNA"/>
</dbReference>
<dbReference type="EMBL" id="BT000677">
    <property type="protein sequence ID" value="AAN31823.1"/>
    <property type="molecule type" value="mRNA"/>
</dbReference>
<dbReference type="EMBL" id="AK318949">
    <property type="protein sequence ID" value="BAH57064.1"/>
    <property type="molecule type" value="mRNA"/>
</dbReference>
<dbReference type="RefSeq" id="NP_198590.1">
    <molecule id="Q9FHP6-1"/>
    <property type="nucleotide sequence ID" value="NM_123133.4"/>
</dbReference>
<dbReference type="PDB" id="5A52">
    <property type="method" value="X-ray"/>
    <property type="resolution" value="1.65 A"/>
    <property type="chains" value="A=1-168"/>
</dbReference>
<dbReference type="PDBsum" id="5A52"/>
<dbReference type="SMR" id="Q9FHP6"/>
<dbReference type="FunCoup" id="Q9FHP6">
    <property type="interactions" value="60"/>
</dbReference>
<dbReference type="IntAct" id="Q9FHP6">
    <property type="interactions" value="1"/>
</dbReference>
<dbReference type="STRING" id="3702.Q9FHP6"/>
<dbReference type="PaxDb" id="3702-AT5G37740.2"/>
<dbReference type="EnsemblPlants" id="AT5G37740.1">
    <molecule id="Q9FHP6-1"/>
    <property type="protein sequence ID" value="AT5G37740.1"/>
    <property type="gene ID" value="AT5G37740"/>
</dbReference>
<dbReference type="GeneID" id="833752"/>
<dbReference type="Gramene" id="AT5G37740.1">
    <molecule id="Q9FHP6-1"/>
    <property type="protein sequence ID" value="AT5G37740.1"/>
    <property type="gene ID" value="AT5G37740"/>
</dbReference>
<dbReference type="KEGG" id="ath:AT5G37740"/>
<dbReference type="Araport" id="AT5G37740"/>
<dbReference type="TAIR" id="AT5G37740"/>
<dbReference type="eggNOG" id="KOG1030">
    <property type="taxonomic scope" value="Eukaryota"/>
</dbReference>
<dbReference type="InParanoid" id="Q9FHP6"/>
<dbReference type="OrthoDB" id="73919at2759"/>
<dbReference type="PhylomeDB" id="Q9FHP6"/>
<dbReference type="EvolutionaryTrace" id="Q9FHP6"/>
<dbReference type="PRO" id="PR:Q9FHP6"/>
<dbReference type="Proteomes" id="UP000006548">
    <property type="component" value="Chromosome 5"/>
</dbReference>
<dbReference type="ExpressionAtlas" id="Q9FHP6">
    <property type="expression patterns" value="baseline and differential"/>
</dbReference>
<dbReference type="GO" id="GO:0005634">
    <property type="term" value="C:nucleus"/>
    <property type="evidence" value="ECO:0000314"/>
    <property type="project" value="UniProtKB"/>
</dbReference>
<dbReference type="GO" id="GO:0005886">
    <property type="term" value="C:plasma membrane"/>
    <property type="evidence" value="ECO:0000314"/>
    <property type="project" value="UniProtKB"/>
</dbReference>
<dbReference type="GO" id="GO:0005509">
    <property type="term" value="F:calcium ion binding"/>
    <property type="evidence" value="ECO:0000314"/>
    <property type="project" value="UniProtKB"/>
</dbReference>
<dbReference type="GO" id="GO:0005096">
    <property type="term" value="F:GTPase activator activity"/>
    <property type="evidence" value="ECO:0000250"/>
    <property type="project" value="UniProtKB"/>
</dbReference>
<dbReference type="GO" id="GO:0008289">
    <property type="term" value="F:lipid binding"/>
    <property type="evidence" value="ECO:0000250"/>
    <property type="project" value="UniProtKB"/>
</dbReference>
<dbReference type="GO" id="GO:0005543">
    <property type="term" value="F:phospholipid binding"/>
    <property type="evidence" value="ECO:0000315"/>
    <property type="project" value="UniProtKB"/>
</dbReference>
<dbReference type="GO" id="GO:0042803">
    <property type="term" value="F:protein homodimerization activity"/>
    <property type="evidence" value="ECO:0000250"/>
    <property type="project" value="UniProtKB"/>
</dbReference>
<dbReference type="GO" id="GO:0009738">
    <property type="term" value="P:abscisic acid-activated signaling pathway"/>
    <property type="evidence" value="ECO:0007669"/>
    <property type="project" value="UniProtKB-KW"/>
</dbReference>
<dbReference type="GO" id="GO:0009789">
    <property type="term" value="P:positive regulation of abscisic acid-activated signaling pathway"/>
    <property type="evidence" value="ECO:0000315"/>
    <property type="project" value="UniProtKB"/>
</dbReference>
<dbReference type="CDD" id="cd04038">
    <property type="entry name" value="C2_ArfGAP"/>
    <property type="match status" value="1"/>
</dbReference>
<dbReference type="Gene3D" id="2.60.40.150">
    <property type="entry name" value="C2 domain"/>
    <property type="match status" value="1"/>
</dbReference>
<dbReference type="InterPro" id="IPR000008">
    <property type="entry name" value="C2_dom"/>
</dbReference>
<dbReference type="InterPro" id="IPR035892">
    <property type="entry name" value="C2_domain_sf"/>
</dbReference>
<dbReference type="InterPro" id="IPR044562">
    <property type="entry name" value="CAR1-11"/>
</dbReference>
<dbReference type="PANTHER" id="PTHR45933:SF11">
    <property type="entry name" value="PROTEIN C2-DOMAIN ABA-RELATED 1"/>
    <property type="match status" value="1"/>
</dbReference>
<dbReference type="PANTHER" id="PTHR45933">
    <property type="entry name" value="PROTEIN C2-DOMAIN ABA-RELATED 4"/>
    <property type="match status" value="1"/>
</dbReference>
<dbReference type="Pfam" id="PF00168">
    <property type="entry name" value="C2"/>
    <property type="match status" value="1"/>
</dbReference>
<dbReference type="SMART" id="SM00239">
    <property type="entry name" value="C2"/>
    <property type="match status" value="1"/>
</dbReference>
<dbReference type="SUPFAM" id="SSF49562">
    <property type="entry name" value="C2 domain (Calcium/lipid-binding domain, CaLB)"/>
    <property type="match status" value="1"/>
</dbReference>
<dbReference type="PROSITE" id="PS50004">
    <property type="entry name" value="C2"/>
    <property type="match status" value="1"/>
</dbReference>
<protein>
    <recommendedName>
        <fullName evidence="6">Protein C2-DOMAIN ABA-RELATED 1</fullName>
    </recommendedName>
</protein>
<evidence type="ECO:0000250" key="1">
    <source>
        <dbReference type="UniProtKB" id="Q9LVH4"/>
    </source>
</evidence>
<evidence type="ECO:0000250" key="2">
    <source>
        <dbReference type="UniProtKB" id="Q9SSL1"/>
    </source>
</evidence>
<evidence type="ECO:0000255" key="3">
    <source>
        <dbReference type="PROSITE-ProRule" id="PRU00041"/>
    </source>
</evidence>
<evidence type="ECO:0000269" key="4">
    <source>
    </source>
</evidence>
<evidence type="ECO:0000269" key="5">
    <source>
    </source>
</evidence>
<evidence type="ECO:0000303" key="6">
    <source>
    </source>
</evidence>
<evidence type="ECO:0000305" key="7"/>
<evidence type="ECO:0000305" key="8">
    <source>
    </source>
</evidence>
<evidence type="ECO:0000312" key="9">
    <source>
        <dbReference type="Araport" id="AT5G37740"/>
    </source>
</evidence>
<evidence type="ECO:0000312" key="10">
    <source>
        <dbReference type="EMBL" id="BAB08320.1"/>
    </source>
</evidence>
<evidence type="ECO:0000312" key="11">
    <source>
        <dbReference type="EMBL" id="BAH57064.1"/>
    </source>
</evidence>
<evidence type="ECO:0007744" key="12">
    <source>
        <dbReference type="PDB" id="5A52"/>
    </source>
</evidence>
<evidence type="ECO:0007829" key="13">
    <source>
        <dbReference type="PDB" id="5A52"/>
    </source>
</evidence>
<proteinExistence type="evidence at protein level"/>
<accession>Q9FHP6</accession>
<accession>C0Z2Y5</accession>
<reference key="1">
    <citation type="journal article" date="1999" name="DNA Res.">
        <title>Structural analysis of Arabidopsis thaliana chromosome 5. IX. Sequence features of the regions of 1,011,550 bp covered by seventeen P1 and TAC clones.</title>
        <authorList>
            <person name="Kaneko T."/>
            <person name="Katoh T."/>
            <person name="Sato S."/>
            <person name="Nakamura Y."/>
            <person name="Asamizu E."/>
            <person name="Kotani H."/>
            <person name="Miyajima N."/>
            <person name="Tabata S."/>
        </authorList>
    </citation>
    <scope>NUCLEOTIDE SEQUENCE [LARGE SCALE GENOMIC DNA]</scope>
    <source>
        <strain>cv. Columbia</strain>
    </source>
</reference>
<reference key="2">
    <citation type="journal article" date="2017" name="Plant J.">
        <title>Araport11: a complete reannotation of the Arabidopsis thaliana reference genome.</title>
        <authorList>
            <person name="Cheng C.Y."/>
            <person name="Krishnakumar V."/>
            <person name="Chan A.P."/>
            <person name="Thibaud-Nissen F."/>
            <person name="Schobel S."/>
            <person name="Town C.D."/>
        </authorList>
    </citation>
    <scope>GENOME REANNOTATION</scope>
    <source>
        <strain>cv. Columbia</strain>
    </source>
</reference>
<reference key="3">
    <citation type="journal article" date="2003" name="Science">
        <title>Empirical analysis of transcriptional activity in the Arabidopsis genome.</title>
        <authorList>
            <person name="Yamada K."/>
            <person name="Lim J."/>
            <person name="Dale J.M."/>
            <person name="Chen H."/>
            <person name="Shinn P."/>
            <person name="Palm C.J."/>
            <person name="Southwick A.M."/>
            <person name="Wu H.C."/>
            <person name="Kim C.J."/>
            <person name="Nguyen M."/>
            <person name="Pham P.K."/>
            <person name="Cheuk R.F."/>
            <person name="Karlin-Newmann G."/>
            <person name="Liu S.X."/>
            <person name="Lam B."/>
            <person name="Sakano H."/>
            <person name="Wu T."/>
            <person name="Yu G."/>
            <person name="Miranda M."/>
            <person name="Quach H.L."/>
            <person name="Tripp M."/>
            <person name="Chang C.H."/>
            <person name="Lee J.M."/>
            <person name="Toriumi M.J."/>
            <person name="Chan M.M."/>
            <person name="Tang C.C."/>
            <person name="Onodera C.S."/>
            <person name="Deng J.M."/>
            <person name="Akiyama K."/>
            <person name="Ansari Y."/>
            <person name="Arakawa T."/>
            <person name="Banh J."/>
            <person name="Banno F."/>
            <person name="Bowser L."/>
            <person name="Brooks S.Y."/>
            <person name="Carninci P."/>
            <person name="Chao Q."/>
            <person name="Choy N."/>
            <person name="Enju A."/>
            <person name="Goldsmith A.D."/>
            <person name="Gurjal M."/>
            <person name="Hansen N.F."/>
            <person name="Hayashizaki Y."/>
            <person name="Johnson-Hopson C."/>
            <person name="Hsuan V.W."/>
            <person name="Iida K."/>
            <person name="Karnes M."/>
            <person name="Khan S."/>
            <person name="Koesema E."/>
            <person name="Ishida J."/>
            <person name="Jiang P.X."/>
            <person name="Jones T."/>
            <person name="Kawai J."/>
            <person name="Kamiya A."/>
            <person name="Meyers C."/>
            <person name="Nakajima M."/>
            <person name="Narusaka M."/>
            <person name="Seki M."/>
            <person name="Sakurai T."/>
            <person name="Satou M."/>
            <person name="Tamse R."/>
            <person name="Vaysberg M."/>
            <person name="Wallender E.K."/>
            <person name="Wong C."/>
            <person name="Yamamura Y."/>
            <person name="Yuan S."/>
            <person name="Shinozaki K."/>
            <person name="Davis R.W."/>
            <person name="Theologis A."/>
            <person name="Ecker J.R."/>
        </authorList>
    </citation>
    <scope>NUCLEOTIDE SEQUENCE [LARGE SCALE MRNA]</scope>
    <source>
        <strain>cv. Columbia</strain>
    </source>
</reference>
<reference key="4">
    <citation type="journal article" date="2009" name="DNA Res.">
        <title>Analysis of multiple occurrences of alternative splicing events in Arabidopsis thaliana using novel sequenced full-length cDNAs.</title>
        <authorList>
            <person name="Iida K."/>
            <person name="Fukami-Kobayashi K."/>
            <person name="Toyoda A."/>
            <person name="Sakaki Y."/>
            <person name="Kobayashi M."/>
            <person name="Seki M."/>
            <person name="Shinozaki K."/>
        </authorList>
    </citation>
    <scope>NUCLEOTIDE SEQUENCE [LARGE SCALE MRNA] (ISOFORM 2)</scope>
    <source>
        <strain>cv. Columbia</strain>
        <tissue evidence="11">Flower</tissue>
        <tissue>Silique</tissue>
    </source>
</reference>
<reference key="5">
    <citation type="journal article" date="2014" name="Plant Cell">
        <title>C2-domain abscisic acid-related proteins mediate the interaction of PYR/PYL/RCAR abscisic acid receptors with the plasma membrane and regulate abscisic acid sensitivity in Arabidopsis.</title>
        <authorList>
            <person name="Rodriguez L."/>
            <person name="Gonzalez-Guzman M."/>
            <person name="Diaz M."/>
            <person name="Rodrigues A."/>
            <person name="Izquierdo-Garcia A.C."/>
            <person name="Peirats-Llobet M."/>
            <person name="Fernandez M.A."/>
            <person name="Antoni R."/>
            <person name="Fernandez D."/>
            <person name="Marquez J.A."/>
            <person name="Mulet J.M."/>
            <person name="Albert A."/>
            <person name="Rodriguez P.L."/>
        </authorList>
    </citation>
    <scope>FUNCTION</scope>
    <scope>MUTAGENESIS OF ASP-22 AND ASP-27</scope>
    <scope>DISRUPTION PHENOTYPE</scope>
    <scope>INTERACTION WITH PYR1; PYL1; PYL4; PYL6 AND PYL8</scope>
    <scope>SUBCELLULAR LOCATION</scope>
    <scope>TISSUE SPECIFICITY</scope>
    <scope>DEVELOPMENTAL STAGE</scope>
    <scope>GENE FAMILY</scope>
    <scope>NOMENCLATURE</scope>
</reference>
<reference key="6">
    <citation type="journal article" date="2016" name="Proc. Natl. Acad. Sci. U.S.A.">
        <title>Calcium-dependent oligomerization of CAR proteins at cell membrane modulates ABA signaling.</title>
        <authorList>
            <person name="Diaz M."/>
            <person name="Sanchez-Barrena M.J."/>
            <person name="Gonzalez-Rubio J.M."/>
            <person name="Rodriguez L."/>
            <person name="Fernandez D."/>
            <person name="Antoni R."/>
            <person name="Yunta C."/>
            <person name="Belda-Palazon B."/>
            <person name="Gonzalez-Guzman M."/>
            <person name="Peirats-Llobet M."/>
            <person name="Menendez M."/>
            <person name="Boskovic J."/>
            <person name="Marquez J.A."/>
            <person name="Rodriguez P.L."/>
            <person name="Albert A."/>
        </authorList>
    </citation>
    <scope>X-RAY CRYSTALLOGRAPHY (1.65 ANGSTROMS) IN COMPLEX WITH CALCIUM</scope>
    <source>
        <strain>cv. Columbia</strain>
    </source>
</reference>
<feature type="chain" id="PRO_0000433311" description="Protein C2-DOMAIN ABA-RELATED 1">
    <location>
        <begin position="1"/>
        <end position="168"/>
    </location>
</feature>
<feature type="domain" description="C2" evidence="3">
    <location>
        <begin position="1"/>
        <end position="104"/>
    </location>
</feature>
<feature type="binding site" evidence="1">
    <location>
        <position position="21"/>
    </location>
    <ligand>
        <name>Ca(2+)</name>
        <dbReference type="ChEBI" id="CHEBI:29108"/>
        <label>1</label>
    </ligand>
</feature>
<feature type="binding site" evidence="1">
    <location>
        <position position="22"/>
    </location>
    <ligand>
        <name>Ca(2+)</name>
        <dbReference type="ChEBI" id="CHEBI:29108"/>
        <label>1</label>
    </ligand>
</feature>
<feature type="binding site" evidence="5 12">
    <location>
        <position position="22"/>
    </location>
    <ligand>
        <name>Ca(2+)</name>
        <dbReference type="ChEBI" id="CHEBI:29108"/>
        <label>2</label>
    </ligand>
</feature>
<feature type="binding site" evidence="5 12">
    <location>
        <position position="27"/>
    </location>
    <ligand>
        <name>Ca(2+)</name>
        <dbReference type="ChEBI" id="CHEBI:29108"/>
        <label>2</label>
    </ligand>
</feature>
<feature type="binding site" evidence="1">
    <location>
        <position position="73"/>
    </location>
    <ligand>
        <name>Ca(2+)</name>
        <dbReference type="ChEBI" id="CHEBI:29108"/>
        <label>1</label>
    </ligand>
</feature>
<feature type="binding site" evidence="5 12">
    <location>
        <position position="73"/>
    </location>
    <ligand>
        <name>Ca(2+)</name>
        <dbReference type="ChEBI" id="CHEBI:29108"/>
        <label>2</label>
    </ligand>
</feature>
<feature type="binding site" evidence="5 12">
    <location>
        <position position="74"/>
    </location>
    <ligand>
        <name>Ca(2+)</name>
        <dbReference type="ChEBI" id="CHEBI:29108"/>
        <label>2</label>
    </ligand>
</feature>
<feature type="binding site" evidence="1">
    <location>
        <position position="75"/>
    </location>
    <ligand>
        <name>Ca(2+)</name>
        <dbReference type="ChEBI" id="CHEBI:29108"/>
        <label>1</label>
    </ligand>
</feature>
<feature type="binding site" evidence="1">
    <location>
        <position position="75"/>
    </location>
    <ligand>
        <name>Ca(2+)</name>
        <dbReference type="ChEBI" id="CHEBI:29108"/>
        <label>2</label>
    </ligand>
</feature>
<feature type="binding site" evidence="1">
    <location>
        <position position="81"/>
    </location>
    <ligand>
        <name>Ca(2+)</name>
        <dbReference type="ChEBI" id="CHEBI:29108"/>
        <label>1</label>
    </ligand>
</feature>
<feature type="modified residue" description="N-acetylmethionine" evidence="2">
    <location>
        <position position="1"/>
    </location>
</feature>
<feature type="splice variant" id="VSP_057720" description="In isoform 2.">
    <original>MENLVGLLRIHVKRGVNLAIRDISSSDPYIVVHCGKQKLKTRVVKHSVNPEWNDDLTLSVTDPNLPIKL</original>
    <variation>MMQ</variation>
    <location>
        <begin position="1"/>
        <end position="69"/>
    </location>
</feature>
<feature type="mutagenesis site" description="Impaired Ca(2+)-dependent phospholipids binding; when associated with A-27." evidence="4">
    <original>D</original>
    <variation>A</variation>
    <location>
        <position position="22"/>
    </location>
</feature>
<feature type="mutagenesis site" description="Impaired Ca(2+)-dependent phospholipids binding; when associated with A-22." evidence="4">
    <original>D</original>
    <variation>A</variation>
    <location>
        <position position="27"/>
    </location>
</feature>
<feature type="strand" evidence="13">
    <location>
        <begin position="6"/>
        <end position="17"/>
    </location>
</feature>
<feature type="strand" evidence="13">
    <location>
        <begin position="21"/>
        <end position="24"/>
    </location>
</feature>
<feature type="strand" evidence="13">
    <location>
        <begin position="28"/>
        <end position="34"/>
    </location>
</feature>
<feature type="strand" evidence="13">
    <location>
        <begin position="37"/>
        <end position="40"/>
    </location>
</feature>
<feature type="strand" evidence="13">
    <location>
        <begin position="54"/>
        <end position="61"/>
    </location>
</feature>
<feature type="strand" evidence="13">
    <location>
        <begin position="67"/>
        <end position="73"/>
    </location>
</feature>
<feature type="strand" evidence="13">
    <location>
        <begin position="81"/>
        <end position="88"/>
    </location>
</feature>
<feature type="helix" evidence="13">
    <location>
        <begin position="91"/>
        <end position="103"/>
    </location>
</feature>
<feature type="strand" evidence="13">
    <location>
        <begin position="112"/>
        <end position="116"/>
    </location>
</feature>
<feature type="strand" evidence="13">
    <location>
        <begin position="124"/>
        <end position="126"/>
    </location>
</feature>
<feature type="strand" evidence="13">
    <location>
        <begin position="128"/>
        <end position="131"/>
    </location>
</feature>
<feature type="strand" evidence="13">
    <location>
        <begin position="138"/>
        <end position="144"/>
    </location>
</feature>
<feature type="strand" evidence="13">
    <location>
        <begin position="146"/>
        <end position="150"/>
    </location>
</feature>
<feature type="strand" evidence="13">
    <location>
        <begin position="152"/>
        <end position="159"/>
    </location>
</feature>
<name>CAR1_ARATH</name>
<comment type="function">
    <text evidence="1 4">Stimulates the GTPase/ATPase activities of Obg-like ATPases (By similarity). Mediates the transient calcium-dependent interaction of PYR/PYL/RCAR abscisic acid (ABA) receptors with the plasma membrane and thus regulates ABA sensitivity (PubMed:25465408). Binds liposomes in the absence of exogenous Ca(2+), but this activity is enhanced in the presence of Ca(2+) and generates membrane curvature (By similarity).</text>
</comment>
<comment type="cofactor">
    <cofactor evidence="3">
        <name>Ca(2+)</name>
        <dbReference type="ChEBI" id="CHEBI:29108"/>
    </cofactor>
</comment>
<comment type="subunit">
    <text evidence="1 4">Dimers and oligomers (By similarity). Binds to PYR/PYL/RCAR abscisic acid intracellular receptors in an ABA-independent manner, both at the plasma membrane and in the nucleus. Interacts directly with PYR1, PYL1, PYL4, PYL6 and PYL8. Binds phospholipids in a Ca(2+)-dependent manner.</text>
</comment>
<comment type="subcellular location">
    <subcellularLocation>
        <location evidence="4">Cell membrane</location>
    </subcellularLocation>
    <subcellularLocation>
        <location evidence="4">Nucleus</location>
    </subcellularLocation>
</comment>
<comment type="alternative products">
    <event type="alternative splicing"/>
    <isoform>
        <id>Q9FHP6-1</id>
        <name>1</name>
        <sequence type="displayed"/>
    </isoform>
    <isoform>
        <id>Q9FHP6-2</id>
        <name>2</name>
        <sequence type="described" ref="VSP_057720"/>
    </isoform>
    <text evidence="7">Additional isoforms seem to exist.</text>
</comment>
<comment type="tissue specificity">
    <text evidence="4">Expressed in roots.</text>
</comment>
<comment type="developmental stage">
    <text evidence="4">Predominantly expressed in the vascular bundle of the primary root and in the cortex of the root upper part. In lateral roots, detected in epidermis and root tips.</text>
</comment>
<comment type="disruption phenotype">
    <text evidence="4">When associated with disruption in CAR4, CAR5 and CAR9 genes, reduced sensitivity to abscisic acid (ABA) during seedling establishment and root growth regulation.</text>
</comment>
<comment type="similarity">
    <text evidence="8">Belongs to the plant CAR protein family.</text>
</comment>
<organism>
    <name type="scientific">Arabidopsis thaliana</name>
    <name type="common">Mouse-ear cress</name>
    <dbReference type="NCBI Taxonomy" id="3702"/>
    <lineage>
        <taxon>Eukaryota</taxon>
        <taxon>Viridiplantae</taxon>
        <taxon>Streptophyta</taxon>
        <taxon>Embryophyta</taxon>
        <taxon>Tracheophyta</taxon>
        <taxon>Spermatophyta</taxon>
        <taxon>Magnoliopsida</taxon>
        <taxon>eudicotyledons</taxon>
        <taxon>Gunneridae</taxon>
        <taxon>Pentapetalae</taxon>
        <taxon>rosids</taxon>
        <taxon>malvids</taxon>
        <taxon>Brassicales</taxon>
        <taxon>Brassicaceae</taxon>
        <taxon>Camelineae</taxon>
        <taxon>Arabidopsis</taxon>
    </lineage>
</organism>
<sequence>MENLVGLLRIHVKRGVNLAIRDISSSDPYIVVHCGKQKLKTRVVKHSVNPEWNDDLTLSVTDPNLPIKLTVYDYDLLSADDKMGEAEFHIGPFIEAIKFAHQLGPGLPNGTIIKKIEPSRKNCLSESSHIVLNQGKIVQNMFLRLQHVECGEVELQLEWIDVPGSRGI</sequence>
<keyword id="KW-0002">3D-structure</keyword>
<keyword id="KW-0938">Abscisic acid signaling pathway</keyword>
<keyword id="KW-0007">Acetylation</keyword>
<keyword id="KW-0025">Alternative splicing</keyword>
<keyword id="KW-0106">Calcium</keyword>
<keyword id="KW-1003">Cell membrane</keyword>
<keyword id="KW-0343">GTPase activation</keyword>
<keyword id="KW-0446">Lipid-binding</keyword>
<keyword id="KW-0472">Membrane</keyword>
<keyword id="KW-0479">Metal-binding</keyword>
<keyword id="KW-0539">Nucleus</keyword>
<keyword id="KW-1185">Reference proteome</keyword>
<gene>
    <name evidence="6" type="primary">CAR1</name>
    <name evidence="9" type="ordered locus">At5g37740</name>
    <name evidence="10" type="ORF">K12B20.22</name>
</gene>